<keyword id="KW-0131">Cell cycle</keyword>
<keyword id="KW-0132">Cell division</keyword>
<keyword id="KW-0133">Cell shape</keyword>
<keyword id="KW-0961">Cell wall biogenesis/degradation</keyword>
<keyword id="KW-0963">Cytoplasm</keyword>
<keyword id="KW-0573">Peptidoglycan synthesis</keyword>
<keyword id="KW-0670">Pyruvate</keyword>
<keyword id="KW-0808">Transferase</keyword>
<organism>
    <name type="scientific">Janthinobacterium sp. (strain Marseille)</name>
    <name type="common">Minibacterium massiliensis</name>
    <dbReference type="NCBI Taxonomy" id="375286"/>
    <lineage>
        <taxon>Bacteria</taxon>
        <taxon>Pseudomonadati</taxon>
        <taxon>Pseudomonadota</taxon>
        <taxon>Betaproteobacteria</taxon>
        <taxon>Burkholderiales</taxon>
        <taxon>Oxalobacteraceae</taxon>
        <taxon>Janthinobacterium</taxon>
    </lineage>
</organism>
<accession>A6T383</accession>
<name>MURA_JANMA</name>
<proteinExistence type="inferred from homology"/>
<comment type="function">
    <text evidence="1">Cell wall formation. Adds enolpyruvyl to UDP-N-acetylglucosamine.</text>
</comment>
<comment type="catalytic activity">
    <reaction evidence="1">
        <text>phosphoenolpyruvate + UDP-N-acetyl-alpha-D-glucosamine = UDP-N-acetyl-3-O-(1-carboxyvinyl)-alpha-D-glucosamine + phosphate</text>
        <dbReference type="Rhea" id="RHEA:18681"/>
        <dbReference type="ChEBI" id="CHEBI:43474"/>
        <dbReference type="ChEBI" id="CHEBI:57705"/>
        <dbReference type="ChEBI" id="CHEBI:58702"/>
        <dbReference type="ChEBI" id="CHEBI:68483"/>
        <dbReference type="EC" id="2.5.1.7"/>
    </reaction>
</comment>
<comment type="pathway">
    <text evidence="1">Cell wall biogenesis; peptidoglycan biosynthesis.</text>
</comment>
<comment type="subcellular location">
    <subcellularLocation>
        <location evidence="1">Cytoplasm</location>
    </subcellularLocation>
</comment>
<comment type="similarity">
    <text evidence="1">Belongs to the EPSP synthase family. MurA subfamily.</text>
</comment>
<evidence type="ECO:0000255" key="1">
    <source>
        <dbReference type="HAMAP-Rule" id="MF_00111"/>
    </source>
</evidence>
<feature type="chain" id="PRO_1000023047" description="UDP-N-acetylglucosamine 1-carboxyvinyltransferase">
    <location>
        <begin position="1"/>
        <end position="416"/>
    </location>
</feature>
<feature type="active site" description="Proton donor" evidence="1">
    <location>
        <position position="116"/>
    </location>
</feature>
<feature type="binding site" evidence="1">
    <location>
        <begin position="22"/>
        <end position="23"/>
    </location>
    <ligand>
        <name>phosphoenolpyruvate</name>
        <dbReference type="ChEBI" id="CHEBI:58702"/>
    </ligand>
</feature>
<feature type="binding site" evidence="1">
    <location>
        <position position="92"/>
    </location>
    <ligand>
        <name>UDP-N-acetyl-alpha-D-glucosamine</name>
        <dbReference type="ChEBI" id="CHEBI:57705"/>
    </ligand>
</feature>
<feature type="binding site" evidence="1">
    <location>
        <begin position="121"/>
        <end position="125"/>
    </location>
    <ligand>
        <name>UDP-N-acetyl-alpha-D-glucosamine</name>
        <dbReference type="ChEBI" id="CHEBI:57705"/>
    </ligand>
</feature>
<feature type="binding site" evidence="1">
    <location>
        <position position="304"/>
    </location>
    <ligand>
        <name>UDP-N-acetyl-alpha-D-glucosamine</name>
        <dbReference type="ChEBI" id="CHEBI:57705"/>
    </ligand>
</feature>
<feature type="binding site" evidence="1">
    <location>
        <position position="326"/>
    </location>
    <ligand>
        <name>UDP-N-acetyl-alpha-D-glucosamine</name>
        <dbReference type="ChEBI" id="CHEBI:57705"/>
    </ligand>
</feature>
<feature type="modified residue" description="2-(S-cysteinyl)pyruvic acid O-phosphothioketal" evidence="1">
    <location>
        <position position="116"/>
    </location>
</feature>
<protein>
    <recommendedName>
        <fullName evidence="1">UDP-N-acetylglucosamine 1-carboxyvinyltransferase</fullName>
        <ecNumber evidence="1">2.5.1.7</ecNumber>
    </recommendedName>
    <alternativeName>
        <fullName evidence="1">Enoylpyruvate transferase</fullName>
    </alternativeName>
    <alternativeName>
        <fullName evidence="1">UDP-N-acetylglucosamine enolpyruvyl transferase</fullName>
        <shortName evidence="1">EPT</shortName>
    </alternativeName>
</protein>
<reference key="1">
    <citation type="journal article" date="2007" name="PLoS Genet.">
        <title>Genome analysis of Minibacterium massiliensis highlights the convergent evolution of water-living bacteria.</title>
        <authorList>
            <person name="Audic S."/>
            <person name="Robert C."/>
            <person name="Campagna B."/>
            <person name="Parinello H."/>
            <person name="Claverie J.-M."/>
            <person name="Raoult D."/>
            <person name="Drancourt M."/>
        </authorList>
    </citation>
    <scope>NUCLEOTIDE SEQUENCE [LARGE SCALE GENOMIC DNA]</scope>
    <source>
        <strain>Marseille</strain>
    </source>
</reference>
<gene>
    <name evidence="1" type="primary">murA</name>
    <name type="ordered locus">mma_3290</name>
</gene>
<dbReference type="EC" id="2.5.1.7" evidence="1"/>
<dbReference type="EMBL" id="CP000269">
    <property type="protein sequence ID" value="ABR88978.1"/>
    <property type="molecule type" value="Genomic_DNA"/>
</dbReference>
<dbReference type="RefSeq" id="WP_012081133.1">
    <property type="nucleotide sequence ID" value="NC_009659.1"/>
</dbReference>
<dbReference type="SMR" id="A6T383"/>
<dbReference type="STRING" id="375286.mma_3290"/>
<dbReference type="KEGG" id="mms:mma_3290"/>
<dbReference type="eggNOG" id="COG0766">
    <property type="taxonomic scope" value="Bacteria"/>
</dbReference>
<dbReference type="HOGENOM" id="CLU_027387_0_0_4"/>
<dbReference type="OrthoDB" id="9803760at2"/>
<dbReference type="UniPathway" id="UPA00219"/>
<dbReference type="Proteomes" id="UP000006388">
    <property type="component" value="Chromosome"/>
</dbReference>
<dbReference type="GO" id="GO:0005737">
    <property type="term" value="C:cytoplasm"/>
    <property type="evidence" value="ECO:0007669"/>
    <property type="project" value="UniProtKB-SubCell"/>
</dbReference>
<dbReference type="GO" id="GO:0008760">
    <property type="term" value="F:UDP-N-acetylglucosamine 1-carboxyvinyltransferase activity"/>
    <property type="evidence" value="ECO:0007669"/>
    <property type="project" value="UniProtKB-UniRule"/>
</dbReference>
<dbReference type="GO" id="GO:0051301">
    <property type="term" value="P:cell division"/>
    <property type="evidence" value="ECO:0007669"/>
    <property type="project" value="UniProtKB-KW"/>
</dbReference>
<dbReference type="GO" id="GO:0071555">
    <property type="term" value="P:cell wall organization"/>
    <property type="evidence" value="ECO:0007669"/>
    <property type="project" value="UniProtKB-KW"/>
</dbReference>
<dbReference type="GO" id="GO:0009252">
    <property type="term" value="P:peptidoglycan biosynthetic process"/>
    <property type="evidence" value="ECO:0007669"/>
    <property type="project" value="UniProtKB-UniRule"/>
</dbReference>
<dbReference type="GO" id="GO:0008360">
    <property type="term" value="P:regulation of cell shape"/>
    <property type="evidence" value="ECO:0007669"/>
    <property type="project" value="UniProtKB-KW"/>
</dbReference>
<dbReference type="GO" id="GO:0019277">
    <property type="term" value="P:UDP-N-acetylgalactosamine biosynthetic process"/>
    <property type="evidence" value="ECO:0007669"/>
    <property type="project" value="InterPro"/>
</dbReference>
<dbReference type="CDD" id="cd01555">
    <property type="entry name" value="UdpNAET"/>
    <property type="match status" value="1"/>
</dbReference>
<dbReference type="FunFam" id="3.65.10.10:FF:000001">
    <property type="entry name" value="UDP-N-acetylglucosamine 1-carboxyvinyltransferase"/>
    <property type="match status" value="1"/>
</dbReference>
<dbReference type="Gene3D" id="3.65.10.10">
    <property type="entry name" value="Enolpyruvate transferase domain"/>
    <property type="match status" value="2"/>
</dbReference>
<dbReference type="HAMAP" id="MF_00111">
    <property type="entry name" value="MurA"/>
    <property type="match status" value="1"/>
</dbReference>
<dbReference type="InterPro" id="IPR001986">
    <property type="entry name" value="Enolpyruvate_Tfrase_dom"/>
</dbReference>
<dbReference type="InterPro" id="IPR036968">
    <property type="entry name" value="Enolpyruvate_Tfrase_sf"/>
</dbReference>
<dbReference type="InterPro" id="IPR050068">
    <property type="entry name" value="MurA_subfamily"/>
</dbReference>
<dbReference type="InterPro" id="IPR013792">
    <property type="entry name" value="RNA3'P_cycl/enolpyr_Trfase_a/b"/>
</dbReference>
<dbReference type="InterPro" id="IPR005750">
    <property type="entry name" value="UDP_GlcNAc_COvinyl_MurA"/>
</dbReference>
<dbReference type="NCBIfam" id="TIGR01072">
    <property type="entry name" value="murA"/>
    <property type="match status" value="1"/>
</dbReference>
<dbReference type="NCBIfam" id="NF006873">
    <property type="entry name" value="PRK09369.1"/>
    <property type="match status" value="1"/>
</dbReference>
<dbReference type="PANTHER" id="PTHR43783">
    <property type="entry name" value="UDP-N-ACETYLGLUCOSAMINE 1-CARBOXYVINYLTRANSFERASE"/>
    <property type="match status" value="1"/>
</dbReference>
<dbReference type="PANTHER" id="PTHR43783:SF1">
    <property type="entry name" value="UDP-N-ACETYLGLUCOSAMINE 1-CARBOXYVINYLTRANSFERASE"/>
    <property type="match status" value="1"/>
</dbReference>
<dbReference type="Pfam" id="PF00275">
    <property type="entry name" value="EPSP_synthase"/>
    <property type="match status" value="1"/>
</dbReference>
<dbReference type="SUPFAM" id="SSF55205">
    <property type="entry name" value="EPT/RTPC-like"/>
    <property type="match status" value="1"/>
</dbReference>
<sequence length="416" mass="44433">MDKLLIQGGHRLSGEIAISGAKNAALPILCAGLLTADTVQLSNVPNLQDVTTILRLLRQMGLRAEQDGDKVVLNGSAIDKLEAPYEMVKTMRASILVLGPLLARFGEAKVSLPGGCAIGSRPVDQHIKGLQAMGAEVTIEAGYIHAKAKKLKGTRIVTDMITVTGTENLLMAATLADGETILENAAREPEVTDLANLLVAMGAKIEGIGTDRLVIQGVERLHGATHAVIADRIETATFMCAVATVGGDVTLRNARTDTLDVAFDKLREAGAILTSGDDWIRVQMASRPKAVSFRTTEYPGFPTDMQAQFMAMNCVAEGSSRVIETIFENRFMHVQEMNRLGAAITIEGHTAIINGVDKLVGAPVMATDLRASASLVIAALAAEGETLIDRIYHLDRGYDRMEVKLSAVGAQIQRVK</sequence>